<sequence length="373" mass="41746">MSEQDQELRNRQAQFAKELHGESVERSGLTALLGKNREAQQEAVAKYLRHWDGATDAEAEERRLADYNESTHSYYNVVTDFYEYGWGASFHFSRFYTGESFAMSMARHEHYLAHRAGITSGDLVLDVGCGVGGPAREIARFTGCRVVGLNNNDYQIMKGKHYSRKLGLGDQVSYVKGDFMNMDFPDATFDKVYAIEATCHAPSFEGVYGEIYRVLKPGGVFAVYEWVMTENYDETNPEHRRIAYDIELGDGIPKMYSVKVARDALAKVGFEILVDEDRADNDDPVPWYYPLTGEWAYIQTIADLGTFVRTSALGRRVTSAFVSLMETLRLAPRGSSEVVNALESAAAGLVAGGKSKLFTPMMLFVARKPETAE</sequence>
<reference key="1">
    <citation type="journal article" date="2004" name="Science">
        <title>The Ashbya gossypii genome as a tool for mapping the ancient Saccharomyces cerevisiae genome.</title>
        <authorList>
            <person name="Dietrich F.S."/>
            <person name="Voegeli S."/>
            <person name="Brachat S."/>
            <person name="Lerch A."/>
            <person name="Gates K."/>
            <person name="Steiner S."/>
            <person name="Mohr C."/>
            <person name="Poehlmann R."/>
            <person name="Luedi P."/>
            <person name="Choi S."/>
            <person name="Wing R.A."/>
            <person name="Flavier A."/>
            <person name="Gaffney T.D."/>
            <person name="Philippsen P."/>
        </authorList>
    </citation>
    <scope>NUCLEOTIDE SEQUENCE [LARGE SCALE GENOMIC DNA]</scope>
    <source>
        <strain>ATCC 10895 / CBS 109.51 / FGSC 9923 / NRRL Y-1056</strain>
    </source>
</reference>
<reference key="2">
    <citation type="journal article" date="2013" name="G3 (Bethesda)">
        <title>Genomes of Ashbya fungi isolated from insects reveal four mating-type loci, numerous translocations, lack of transposons, and distinct gene duplications.</title>
        <authorList>
            <person name="Dietrich F.S."/>
            <person name="Voegeli S."/>
            <person name="Kuo S."/>
            <person name="Philippsen P."/>
        </authorList>
    </citation>
    <scope>GENOME REANNOTATION</scope>
    <source>
        <strain>ATCC 10895 / CBS 109.51 / FGSC 9923 / NRRL Y-1056</strain>
    </source>
</reference>
<feature type="chain" id="PRO_0000124788" description="Sterol 24-C-methyltransferase">
    <location>
        <begin position="1"/>
        <end position="373"/>
    </location>
</feature>
<gene>
    <name type="primary">ERG6</name>
    <name type="ordered locus">ADR196W</name>
</gene>
<dbReference type="EC" id="2.1.1.41"/>
<dbReference type="EMBL" id="AE016817">
    <property type="protein sequence ID" value="AAS52116.1"/>
    <property type="molecule type" value="Genomic_DNA"/>
</dbReference>
<dbReference type="RefSeq" id="NP_984292.1">
    <property type="nucleotide sequence ID" value="NM_209645.1"/>
</dbReference>
<dbReference type="SMR" id="Q759S7"/>
<dbReference type="FunCoup" id="Q759S7">
    <property type="interactions" value="326"/>
</dbReference>
<dbReference type="STRING" id="284811.Q759S7"/>
<dbReference type="EnsemblFungi" id="AAS52116">
    <property type="protein sequence ID" value="AAS52116"/>
    <property type="gene ID" value="AGOS_ADR196W"/>
</dbReference>
<dbReference type="GeneID" id="4620454"/>
<dbReference type="KEGG" id="ago:AGOS_ADR196W"/>
<dbReference type="eggNOG" id="KOG1269">
    <property type="taxonomic scope" value="Eukaryota"/>
</dbReference>
<dbReference type="HOGENOM" id="CLU_039068_5_3_1"/>
<dbReference type="InParanoid" id="Q759S7"/>
<dbReference type="OMA" id="NGIATMM"/>
<dbReference type="OrthoDB" id="540004at2759"/>
<dbReference type="UniPathway" id="UPA00768">
    <property type="reaction ID" value="UER00760"/>
</dbReference>
<dbReference type="Proteomes" id="UP000000591">
    <property type="component" value="Chromosome IV"/>
</dbReference>
<dbReference type="GO" id="GO:0005783">
    <property type="term" value="C:endoplasmic reticulum"/>
    <property type="evidence" value="ECO:0000318"/>
    <property type="project" value="GO_Central"/>
</dbReference>
<dbReference type="GO" id="GO:0005811">
    <property type="term" value="C:lipid droplet"/>
    <property type="evidence" value="ECO:0007669"/>
    <property type="project" value="EnsemblFungi"/>
</dbReference>
<dbReference type="GO" id="GO:0042802">
    <property type="term" value="F:identical protein binding"/>
    <property type="evidence" value="ECO:0007669"/>
    <property type="project" value="EnsemblFungi"/>
</dbReference>
<dbReference type="GO" id="GO:0003838">
    <property type="term" value="F:sterol 24-C-methyltransferase activity"/>
    <property type="evidence" value="ECO:0000318"/>
    <property type="project" value="GO_Central"/>
</dbReference>
<dbReference type="GO" id="GO:0006696">
    <property type="term" value="P:ergosterol biosynthetic process"/>
    <property type="evidence" value="ECO:0000318"/>
    <property type="project" value="GO_Central"/>
</dbReference>
<dbReference type="GO" id="GO:0032259">
    <property type="term" value="P:methylation"/>
    <property type="evidence" value="ECO:0007669"/>
    <property type="project" value="UniProtKB-KW"/>
</dbReference>
<dbReference type="CDD" id="cd02440">
    <property type="entry name" value="AdoMet_MTases"/>
    <property type="match status" value="1"/>
</dbReference>
<dbReference type="Gene3D" id="3.40.50.150">
    <property type="entry name" value="Vaccinia Virus protein VP39"/>
    <property type="match status" value="1"/>
</dbReference>
<dbReference type="InterPro" id="IPR050447">
    <property type="entry name" value="Erg6_SMT_methyltransf"/>
</dbReference>
<dbReference type="InterPro" id="IPR013216">
    <property type="entry name" value="Methyltransf_11"/>
</dbReference>
<dbReference type="InterPro" id="IPR030384">
    <property type="entry name" value="MeTrfase_SMT"/>
</dbReference>
<dbReference type="InterPro" id="IPR029063">
    <property type="entry name" value="SAM-dependent_MTases_sf"/>
</dbReference>
<dbReference type="InterPro" id="IPR013705">
    <property type="entry name" value="Sterol_MeTrfase_C"/>
</dbReference>
<dbReference type="PANTHER" id="PTHR44068:SF1">
    <property type="entry name" value="HYPOTHETICAL LOC100005854"/>
    <property type="match status" value="1"/>
</dbReference>
<dbReference type="PANTHER" id="PTHR44068">
    <property type="entry name" value="ZGC:194242"/>
    <property type="match status" value="1"/>
</dbReference>
<dbReference type="Pfam" id="PF08241">
    <property type="entry name" value="Methyltransf_11"/>
    <property type="match status" value="1"/>
</dbReference>
<dbReference type="Pfam" id="PF08498">
    <property type="entry name" value="Sterol_MT_C"/>
    <property type="match status" value="1"/>
</dbReference>
<dbReference type="SUPFAM" id="SSF53335">
    <property type="entry name" value="S-adenosyl-L-methionine-dependent methyltransferases"/>
    <property type="match status" value="1"/>
</dbReference>
<dbReference type="PROSITE" id="PS51685">
    <property type="entry name" value="SAM_MT_ERG6_SMT"/>
    <property type="match status" value="1"/>
</dbReference>
<name>ERG6_EREGS</name>
<organism>
    <name type="scientific">Eremothecium gossypii (strain ATCC 10895 / CBS 109.51 / FGSC 9923 / NRRL Y-1056)</name>
    <name type="common">Yeast</name>
    <name type="synonym">Ashbya gossypii</name>
    <dbReference type="NCBI Taxonomy" id="284811"/>
    <lineage>
        <taxon>Eukaryota</taxon>
        <taxon>Fungi</taxon>
        <taxon>Dikarya</taxon>
        <taxon>Ascomycota</taxon>
        <taxon>Saccharomycotina</taxon>
        <taxon>Saccharomycetes</taxon>
        <taxon>Saccharomycetales</taxon>
        <taxon>Saccharomycetaceae</taxon>
        <taxon>Eremothecium</taxon>
    </lineage>
</organism>
<accession>Q759S7</accession>
<evidence type="ECO:0000250" key="1"/>
<evidence type="ECO:0000255" key="2">
    <source>
        <dbReference type="PROSITE-ProRule" id="PRU01022"/>
    </source>
</evidence>
<comment type="function">
    <text evidence="1">Catalyzes the methyl transfer from S-adenosyl-methionine to the C-24 of zymosterol to form fecosterol.</text>
</comment>
<comment type="catalytic activity">
    <reaction>
        <text>zymosterol + S-adenosyl-L-methionine = fecosterol + S-adenosyl-L-homocysteine + H(+)</text>
        <dbReference type="Rhea" id="RHEA:21128"/>
        <dbReference type="ChEBI" id="CHEBI:15378"/>
        <dbReference type="ChEBI" id="CHEBI:17038"/>
        <dbReference type="ChEBI" id="CHEBI:18252"/>
        <dbReference type="ChEBI" id="CHEBI:57856"/>
        <dbReference type="ChEBI" id="CHEBI:59789"/>
        <dbReference type="EC" id="2.1.1.41"/>
    </reaction>
</comment>
<comment type="pathway">
    <text>Steroid metabolism; ergosterol biosynthesis; ergosterol from zymosterol: step 1/5.</text>
</comment>
<comment type="similarity">
    <text evidence="2">Belongs to the class I-like SAM-binding methyltransferase superfamily. Erg6/SMT family.</text>
</comment>
<keyword id="KW-0444">Lipid biosynthesis</keyword>
<keyword id="KW-0443">Lipid metabolism</keyword>
<keyword id="KW-0489">Methyltransferase</keyword>
<keyword id="KW-1185">Reference proteome</keyword>
<keyword id="KW-0949">S-adenosyl-L-methionine</keyword>
<keyword id="KW-0752">Steroid biosynthesis</keyword>
<keyword id="KW-0753">Steroid metabolism</keyword>
<keyword id="KW-0756">Sterol biosynthesis</keyword>
<keyword id="KW-1207">Sterol metabolism</keyword>
<keyword id="KW-0808">Transferase</keyword>
<protein>
    <recommendedName>
        <fullName>Sterol 24-C-methyltransferase</fullName>
        <ecNumber>2.1.1.41</ecNumber>
    </recommendedName>
    <alternativeName>
        <fullName>Delta(24)-sterol C-methyltransferase</fullName>
    </alternativeName>
</protein>
<proteinExistence type="inferred from homology"/>